<organism>
    <name type="scientific">Helicobacter pylori (strain ATCC 700392 / 26695)</name>
    <name type="common">Campylobacter pylori</name>
    <dbReference type="NCBI Taxonomy" id="85962"/>
    <lineage>
        <taxon>Bacteria</taxon>
        <taxon>Pseudomonadati</taxon>
        <taxon>Campylobacterota</taxon>
        <taxon>Epsilonproteobacteria</taxon>
        <taxon>Campylobacterales</taxon>
        <taxon>Helicobacteraceae</taxon>
        <taxon>Helicobacter</taxon>
    </lineage>
</organism>
<proteinExistence type="inferred from homology"/>
<protein>
    <recommendedName>
        <fullName evidence="1">Flavin prenyltransferase UbiX</fullName>
        <ecNumber evidence="1">2.5.1.129</ecNumber>
    </recommendedName>
</protein>
<dbReference type="EC" id="2.5.1.129" evidence="1"/>
<dbReference type="EMBL" id="AE000511">
    <property type="protein sequence ID" value="AAD08515.1"/>
    <property type="molecule type" value="Genomic_DNA"/>
</dbReference>
<dbReference type="PIR" id="D64704">
    <property type="entry name" value="D64704"/>
</dbReference>
<dbReference type="RefSeq" id="NP_208267.1">
    <property type="nucleotide sequence ID" value="NC_000915.1"/>
</dbReference>
<dbReference type="RefSeq" id="WP_000780126.1">
    <property type="nucleotide sequence ID" value="NC_018939.1"/>
</dbReference>
<dbReference type="SMR" id="O26011"/>
<dbReference type="FunCoup" id="O26011">
    <property type="interactions" value="173"/>
</dbReference>
<dbReference type="STRING" id="85962.HP_1476"/>
<dbReference type="PaxDb" id="85962-C694_07640"/>
<dbReference type="EnsemblBacteria" id="AAD08515">
    <property type="protein sequence ID" value="AAD08515"/>
    <property type="gene ID" value="HP_1476"/>
</dbReference>
<dbReference type="KEGG" id="heo:C694_07640"/>
<dbReference type="KEGG" id="hpy:HP_1476"/>
<dbReference type="PATRIC" id="fig|85962.47.peg.1587"/>
<dbReference type="eggNOG" id="COG0163">
    <property type="taxonomic scope" value="Bacteria"/>
</dbReference>
<dbReference type="InParanoid" id="O26011"/>
<dbReference type="OrthoDB" id="9781577at2"/>
<dbReference type="PhylomeDB" id="O26011"/>
<dbReference type="BioCyc" id="MetaCyc:HP_RS07310-MONOMER"/>
<dbReference type="Proteomes" id="UP000000429">
    <property type="component" value="Chromosome"/>
</dbReference>
<dbReference type="GO" id="GO:0016831">
    <property type="term" value="F:carboxy-lyase activity"/>
    <property type="evidence" value="ECO:0000318"/>
    <property type="project" value="GO_Central"/>
</dbReference>
<dbReference type="GO" id="GO:0106141">
    <property type="term" value="F:flavin prenyltransferase activity"/>
    <property type="evidence" value="ECO:0007669"/>
    <property type="project" value="UniProtKB-EC"/>
</dbReference>
<dbReference type="FunFam" id="3.40.50.1950:FF:000011">
    <property type="entry name" value="Flavin prenyltransferase UbiX"/>
    <property type="match status" value="1"/>
</dbReference>
<dbReference type="Gene3D" id="3.40.50.1950">
    <property type="entry name" value="Flavin prenyltransferase-like"/>
    <property type="match status" value="1"/>
</dbReference>
<dbReference type="HAMAP" id="MF_01984">
    <property type="entry name" value="ubiX_pad"/>
    <property type="match status" value="1"/>
</dbReference>
<dbReference type="InterPro" id="IPR036551">
    <property type="entry name" value="Flavin_trans-like"/>
</dbReference>
<dbReference type="InterPro" id="IPR003382">
    <property type="entry name" value="Flavoprotein"/>
</dbReference>
<dbReference type="InterPro" id="IPR004507">
    <property type="entry name" value="UbiX-like"/>
</dbReference>
<dbReference type="NCBIfam" id="NF004685">
    <property type="entry name" value="PRK06029.1"/>
    <property type="match status" value="1"/>
</dbReference>
<dbReference type="NCBIfam" id="TIGR00421">
    <property type="entry name" value="ubiX_pad"/>
    <property type="match status" value="1"/>
</dbReference>
<dbReference type="Pfam" id="PF02441">
    <property type="entry name" value="Flavoprotein"/>
    <property type="match status" value="1"/>
</dbReference>
<dbReference type="SUPFAM" id="SSF52507">
    <property type="entry name" value="Homo-oligomeric flavin-containing Cys decarboxylases, HFCD"/>
    <property type="match status" value="1"/>
</dbReference>
<comment type="function">
    <text evidence="1">Flavin prenyltransferase that catalyzes the synthesis of the prenylated FMN cofactor (prenyl-FMN) for 4-hydroxy-3-polyprenylbenzoic acid decarboxylase UbiD. The prenyltransferase is metal-independent and links a dimethylallyl moiety from dimethylallyl monophosphate (DMAP) to the flavin N5 and C6 atoms of FMN.</text>
</comment>
<comment type="catalytic activity">
    <reaction evidence="1">
        <text>dimethylallyl phosphate + FMNH2 = prenylated FMNH2 + phosphate</text>
        <dbReference type="Rhea" id="RHEA:37743"/>
        <dbReference type="ChEBI" id="CHEBI:43474"/>
        <dbReference type="ChEBI" id="CHEBI:57618"/>
        <dbReference type="ChEBI" id="CHEBI:87467"/>
        <dbReference type="ChEBI" id="CHEBI:88052"/>
        <dbReference type="EC" id="2.5.1.129"/>
    </reaction>
</comment>
<comment type="similarity">
    <text evidence="1">Belongs to the UbiX/PAD1 family.</text>
</comment>
<accession>O26011</accession>
<reference key="1">
    <citation type="journal article" date="1997" name="Nature">
        <title>The complete genome sequence of the gastric pathogen Helicobacter pylori.</title>
        <authorList>
            <person name="Tomb J.-F."/>
            <person name="White O."/>
            <person name="Kerlavage A.R."/>
            <person name="Clayton R.A."/>
            <person name="Sutton G.G."/>
            <person name="Fleischmann R.D."/>
            <person name="Ketchum K.A."/>
            <person name="Klenk H.-P."/>
            <person name="Gill S.R."/>
            <person name="Dougherty B.A."/>
            <person name="Nelson K.E."/>
            <person name="Quackenbush J."/>
            <person name="Zhou L."/>
            <person name="Kirkness E.F."/>
            <person name="Peterson S.N."/>
            <person name="Loftus B.J."/>
            <person name="Richardson D.L."/>
            <person name="Dodson R.J."/>
            <person name="Khalak H.G."/>
            <person name="Glodek A."/>
            <person name="McKenney K."/>
            <person name="FitzGerald L.M."/>
            <person name="Lee N."/>
            <person name="Adams M.D."/>
            <person name="Hickey E.K."/>
            <person name="Berg D.E."/>
            <person name="Gocayne J.D."/>
            <person name="Utterback T.R."/>
            <person name="Peterson J.D."/>
            <person name="Kelley J.M."/>
            <person name="Cotton M.D."/>
            <person name="Weidman J.F."/>
            <person name="Fujii C."/>
            <person name="Bowman C."/>
            <person name="Watthey L."/>
            <person name="Wallin E."/>
            <person name="Hayes W.S."/>
            <person name="Borodovsky M."/>
            <person name="Karp P.D."/>
            <person name="Smith H.O."/>
            <person name="Fraser C.M."/>
            <person name="Venter J.C."/>
        </authorList>
    </citation>
    <scope>NUCLEOTIDE SEQUENCE [LARGE SCALE GENOMIC DNA]</scope>
    <source>
        <strain>ATCC 700392 / 26695</strain>
    </source>
</reference>
<evidence type="ECO:0000255" key="1">
    <source>
        <dbReference type="HAMAP-Rule" id="MF_01984"/>
    </source>
</evidence>
<feature type="chain" id="PRO_0000134966" description="Flavin prenyltransferase UbiX">
    <location>
        <begin position="1"/>
        <end position="187"/>
    </location>
</feature>
<feature type="binding site" evidence="1">
    <location>
        <begin position="9"/>
        <end position="11"/>
    </location>
    <ligand>
        <name>FMN</name>
        <dbReference type="ChEBI" id="CHEBI:58210"/>
    </ligand>
</feature>
<feature type="binding site" evidence="1">
    <location>
        <position position="34"/>
    </location>
    <ligand>
        <name>FMN</name>
        <dbReference type="ChEBI" id="CHEBI:58210"/>
    </ligand>
</feature>
<feature type="binding site" evidence="1">
    <location>
        <position position="123"/>
    </location>
    <ligand>
        <name>FMN</name>
        <dbReference type="ChEBI" id="CHEBI:58210"/>
    </ligand>
</feature>
<feature type="binding site" evidence="1">
    <location>
        <position position="153"/>
    </location>
    <ligand>
        <name>dimethylallyl phosphate</name>
        <dbReference type="ChEBI" id="CHEBI:88052"/>
    </ligand>
</feature>
<feature type="binding site" evidence="1">
    <location>
        <position position="169"/>
    </location>
    <ligand>
        <name>dimethylallyl phosphate</name>
        <dbReference type="ChEBI" id="CHEBI:88052"/>
    </ligand>
</feature>
<name>UBIX_HELPY</name>
<gene>
    <name evidence="1" type="primary">ubiX</name>
    <name type="ordered locus">HP_1476</name>
</gene>
<keyword id="KW-0285">Flavoprotein</keyword>
<keyword id="KW-0288">FMN</keyword>
<keyword id="KW-0637">Prenyltransferase</keyword>
<keyword id="KW-1185">Reference proteome</keyword>
<keyword id="KW-0808">Transferase</keyword>
<sequence length="187" mass="20586">MKLVLGISGASGIPLALRFLEKLPKEIEVFVVASKNAHVVALEESNINLKNAMKDLRPSGTFFNEQDIHASIASGSYGIHKMAIIPASMDMVAKIAHGFGGDLISRSASVMLKEKRPLLIAPREMPLSAIMLENLLKLSHSNAIIAPPMMTYYTQSKTLEAMQDFLVGKWFDSLGIENDLYPRWGMN</sequence>